<sequence length="460" mass="50061">MSAAPSVFLIDDDRDLRKAMQQTLELAGFTVSSFASATEALAGLSADFAGIVISDIRMPGMDGLALFRKILALDPDLPMILVTGHGDIPMAVQAIQDGAYDFIAKPFAADRLVQSARRAEEKRRLVMENRSLRRAAEAASEGLPLIGQTPVMERLRQTLKHIADTDVDVLVAGETGSGKEVVATLLHQWSRRRTGNFVALNCGALPETVIESELFGHEPGAFTGAVKKRIGRIEHASGGTLFLDEIEAMPPATQVKMLRVLEAREITPLGTNLTRPVDIRVVAAAKVDLGDPAARGDFREDLYYRLNVVTLSIPPLRERRDDIPLLFSHFLARASERFGREVPAISAAMRAYLATHSWPGNVRELSHFAERVALGVEGNLGVPAAAPASSGATLPERLERYEADILKQALTAHCGDVKETLQALGIPRKTFYDKLQRHGINRADYVERAGPGRPNAISKT</sequence>
<accession>P13632</accession>
<geneLocation type="plasmid">
    <name>pSymB</name>
    <name>megaplasmid 2</name>
</geneLocation>
<feature type="chain" id="PRO_0000081089" description="C4-dicarboxylate transport transcriptional regulatory protein DctD">
    <location>
        <begin position="1"/>
        <end position="460"/>
    </location>
</feature>
<feature type="domain" description="Response regulatory" evidence="2">
    <location>
        <begin position="6"/>
        <end position="120"/>
    </location>
</feature>
<feature type="domain" description="Sigma-54 factor interaction" evidence="3">
    <location>
        <begin position="145"/>
        <end position="374"/>
    </location>
</feature>
<feature type="DNA-binding region" description="H-T-H motif">
    <location>
        <begin position="417"/>
        <end position="436"/>
    </location>
</feature>
<feature type="region of interest" description="Inter-domain linker" evidence="1">
    <location>
        <begin position="332"/>
        <end position="345"/>
    </location>
</feature>
<feature type="binding site" evidence="3">
    <location>
        <begin position="173"/>
        <end position="180"/>
    </location>
    <ligand>
        <name>ATP</name>
        <dbReference type="ChEBI" id="CHEBI:30616"/>
    </ligand>
</feature>
<feature type="binding site" evidence="3">
    <location>
        <begin position="236"/>
        <end position="245"/>
    </location>
    <ligand>
        <name>ATP</name>
        <dbReference type="ChEBI" id="CHEBI:30616"/>
    </ligand>
</feature>
<feature type="modified residue" description="4-aspartylphosphate" evidence="2">
    <location>
        <position position="55"/>
    </location>
</feature>
<feature type="sequence conflict" description="In Ref. 1; AAA63513/AAA63514." evidence="5" ref="1">
    <original>G</original>
    <variation>E</variation>
    <location>
        <position position="43"/>
    </location>
</feature>
<feature type="sequence conflict" description="In Ref. 1." evidence="5" ref="1">
    <original>R</original>
    <variation>G</variation>
    <location>
        <position position="68"/>
    </location>
</feature>
<feature type="sequence conflict" description="In Ref. 1." evidence="5" ref="1">
    <original>I</original>
    <variation>V</variation>
    <location>
        <position position="70"/>
    </location>
</feature>
<feature type="sequence conflict" description="In Ref. 1; AAA63513/AAA63514." evidence="5" ref="1">
    <original>V</original>
    <variation>A</variation>
    <location>
        <position position="151"/>
    </location>
</feature>
<feature type="strand" evidence="6">
    <location>
        <begin position="6"/>
        <end position="10"/>
    </location>
</feature>
<feature type="helix" evidence="6">
    <location>
        <begin position="14"/>
        <end position="26"/>
    </location>
</feature>
<feature type="strand" evidence="6">
    <location>
        <begin position="30"/>
        <end position="35"/>
    </location>
</feature>
<feature type="helix" evidence="6">
    <location>
        <begin position="37"/>
        <end position="42"/>
    </location>
</feature>
<feature type="strand" evidence="6">
    <location>
        <begin position="50"/>
        <end position="56"/>
    </location>
</feature>
<feature type="strand" evidence="6">
    <location>
        <begin position="59"/>
        <end position="61"/>
    </location>
</feature>
<feature type="helix" evidence="6">
    <location>
        <begin position="63"/>
        <end position="73"/>
    </location>
</feature>
<feature type="strand" evidence="6">
    <location>
        <begin position="79"/>
        <end position="83"/>
    </location>
</feature>
<feature type="helix" evidence="6">
    <location>
        <begin position="85"/>
        <end position="87"/>
    </location>
</feature>
<feature type="helix" evidence="6">
    <location>
        <begin position="88"/>
        <end position="96"/>
    </location>
</feature>
<feature type="strand" evidence="6">
    <location>
        <begin position="101"/>
        <end position="106"/>
    </location>
</feature>
<feature type="helix" evidence="6">
    <location>
        <begin position="109"/>
        <end position="142"/>
    </location>
</feature>
<proteinExistence type="evidence at protein level"/>
<organism>
    <name type="scientific">Rhizobium meliloti (strain 1021)</name>
    <name type="common">Ensifer meliloti</name>
    <name type="synonym">Sinorhizobium meliloti</name>
    <dbReference type="NCBI Taxonomy" id="266834"/>
    <lineage>
        <taxon>Bacteria</taxon>
        <taxon>Pseudomonadati</taxon>
        <taxon>Pseudomonadota</taxon>
        <taxon>Alphaproteobacteria</taxon>
        <taxon>Hyphomicrobiales</taxon>
        <taxon>Rhizobiaceae</taxon>
        <taxon>Sinorhizobium/Ensifer group</taxon>
        <taxon>Sinorhizobium</taxon>
    </lineage>
</organism>
<dbReference type="EMBL" id="J03683">
    <property type="protein sequence ID" value="AAA63513.1"/>
    <property type="molecule type" value="Genomic_DNA"/>
</dbReference>
<dbReference type="EMBL" id="J03683">
    <property type="protein sequence ID" value="AAA63514.1"/>
    <property type="status" value="ALT_INIT"/>
    <property type="molecule type" value="Genomic_DNA"/>
</dbReference>
<dbReference type="EMBL" id="M26531">
    <property type="protein sequence ID" value="AAA26250.1"/>
    <property type="molecule type" value="Genomic_DNA"/>
</dbReference>
<dbReference type="EMBL" id="AL591985">
    <property type="protein sequence ID" value="CAC49925.1"/>
    <property type="molecule type" value="Genomic_DNA"/>
</dbReference>
<dbReference type="PIR" id="C33586">
    <property type="entry name" value="C33586"/>
</dbReference>
<dbReference type="PIR" id="E96032">
    <property type="entry name" value="E96032"/>
</dbReference>
<dbReference type="RefSeq" id="NP_438065.1">
    <property type="nucleotide sequence ID" value="NC_003078.1"/>
</dbReference>
<dbReference type="RefSeq" id="WP_003529421.1">
    <property type="nucleotide sequence ID" value="NC_003078.1"/>
</dbReference>
<dbReference type="PDB" id="1L5Y">
    <property type="method" value="X-ray"/>
    <property type="resolution" value="2.10 A"/>
    <property type="chains" value="A/B=2-143"/>
</dbReference>
<dbReference type="PDB" id="1L5Z">
    <property type="method" value="X-ray"/>
    <property type="resolution" value="2.00 A"/>
    <property type="chains" value="A=2-143"/>
</dbReference>
<dbReference type="PDB" id="1QKK">
    <property type="method" value="X-ray"/>
    <property type="resolution" value="1.70 A"/>
    <property type="chains" value="A=2-143"/>
</dbReference>
<dbReference type="PDBsum" id="1L5Y"/>
<dbReference type="PDBsum" id="1L5Z"/>
<dbReference type="PDBsum" id="1QKK"/>
<dbReference type="SMR" id="P13632"/>
<dbReference type="MINT" id="P13632"/>
<dbReference type="EnsemblBacteria" id="CAC49925">
    <property type="protein sequence ID" value="CAC49925"/>
    <property type="gene ID" value="SM_b20613"/>
</dbReference>
<dbReference type="KEGG" id="sme:SM_b20613"/>
<dbReference type="PATRIC" id="fig|266834.11.peg.6450"/>
<dbReference type="eggNOG" id="COG2204">
    <property type="taxonomic scope" value="Bacteria"/>
</dbReference>
<dbReference type="HOGENOM" id="CLU_000445_0_5_5"/>
<dbReference type="OrthoDB" id="9804019at2"/>
<dbReference type="EvolutionaryTrace" id="P13632"/>
<dbReference type="Proteomes" id="UP000001976">
    <property type="component" value="Plasmid pSymB"/>
</dbReference>
<dbReference type="GO" id="GO:0005737">
    <property type="term" value="C:cytoplasm"/>
    <property type="evidence" value="ECO:0007669"/>
    <property type="project" value="UniProtKB-SubCell"/>
</dbReference>
<dbReference type="GO" id="GO:0005524">
    <property type="term" value="F:ATP binding"/>
    <property type="evidence" value="ECO:0007669"/>
    <property type="project" value="UniProtKB-KW"/>
</dbReference>
<dbReference type="GO" id="GO:0016887">
    <property type="term" value="F:ATP hydrolysis activity"/>
    <property type="evidence" value="ECO:0007669"/>
    <property type="project" value="InterPro"/>
</dbReference>
<dbReference type="GO" id="GO:0043565">
    <property type="term" value="F:sequence-specific DNA binding"/>
    <property type="evidence" value="ECO:0007669"/>
    <property type="project" value="InterPro"/>
</dbReference>
<dbReference type="GO" id="GO:0000160">
    <property type="term" value="P:phosphorelay signal transduction system"/>
    <property type="evidence" value="ECO:0007669"/>
    <property type="project" value="UniProtKB-KW"/>
</dbReference>
<dbReference type="GO" id="GO:0006355">
    <property type="term" value="P:regulation of DNA-templated transcription"/>
    <property type="evidence" value="ECO:0007669"/>
    <property type="project" value="InterPro"/>
</dbReference>
<dbReference type="CDD" id="cd00009">
    <property type="entry name" value="AAA"/>
    <property type="match status" value="1"/>
</dbReference>
<dbReference type="CDD" id="cd17549">
    <property type="entry name" value="REC_DctD-like"/>
    <property type="match status" value="1"/>
</dbReference>
<dbReference type="FunFam" id="3.40.50.2300:FF:000018">
    <property type="entry name" value="DNA-binding transcriptional regulator NtrC"/>
    <property type="match status" value="1"/>
</dbReference>
<dbReference type="FunFam" id="3.40.50.300:FF:000006">
    <property type="entry name" value="DNA-binding transcriptional regulator NtrC"/>
    <property type="match status" value="1"/>
</dbReference>
<dbReference type="Gene3D" id="1.10.8.60">
    <property type="match status" value="1"/>
</dbReference>
<dbReference type="Gene3D" id="3.40.50.2300">
    <property type="match status" value="1"/>
</dbReference>
<dbReference type="Gene3D" id="1.10.10.60">
    <property type="entry name" value="Homeodomain-like"/>
    <property type="match status" value="1"/>
</dbReference>
<dbReference type="Gene3D" id="3.40.50.300">
    <property type="entry name" value="P-loop containing nucleotide triphosphate hydrolases"/>
    <property type="match status" value="1"/>
</dbReference>
<dbReference type="InterPro" id="IPR003593">
    <property type="entry name" value="AAA+_ATPase"/>
</dbReference>
<dbReference type="InterPro" id="IPR011006">
    <property type="entry name" value="CheY-like_superfamily"/>
</dbReference>
<dbReference type="InterPro" id="IPR009057">
    <property type="entry name" value="Homeodomain-like_sf"/>
</dbReference>
<dbReference type="InterPro" id="IPR002197">
    <property type="entry name" value="HTH_Fis"/>
</dbReference>
<dbReference type="InterPro" id="IPR027417">
    <property type="entry name" value="P-loop_NTPase"/>
</dbReference>
<dbReference type="InterPro" id="IPR001789">
    <property type="entry name" value="Sig_transdc_resp-reg_receiver"/>
</dbReference>
<dbReference type="InterPro" id="IPR002078">
    <property type="entry name" value="Sigma_54_int"/>
</dbReference>
<dbReference type="InterPro" id="IPR025662">
    <property type="entry name" value="Sigma_54_int_dom_ATP-bd_1"/>
</dbReference>
<dbReference type="InterPro" id="IPR025943">
    <property type="entry name" value="Sigma_54_int_dom_ATP-bd_2"/>
</dbReference>
<dbReference type="InterPro" id="IPR025944">
    <property type="entry name" value="Sigma_54_int_dom_CS"/>
</dbReference>
<dbReference type="PANTHER" id="PTHR32071:SF57">
    <property type="entry name" value="C4-DICARBOXYLATE TRANSPORT TRANSCRIPTIONAL REGULATORY PROTEIN DCTD"/>
    <property type="match status" value="1"/>
</dbReference>
<dbReference type="PANTHER" id="PTHR32071">
    <property type="entry name" value="TRANSCRIPTIONAL REGULATORY PROTEIN"/>
    <property type="match status" value="1"/>
</dbReference>
<dbReference type="Pfam" id="PF02954">
    <property type="entry name" value="HTH_8"/>
    <property type="match status" value="1"/>
</dbReference>
<dbReference type="Pfam" id="PF00072">
    <property type="entry name" value="Response_reg"/>
    <property type="match status" value="1"/>
</dbReference>
<dbReference type="Pfam" id="PF00158">
    <property type="entry name" value="Sigma54_activat"/>
    <property type="match status" value="1"/>
</dbReference>
<dbReference type="SMART" id="SM00382">
    <property type="entry name" value="AAA"/>
    <property type="match status" value="1"/>
</dbReference>
<dbReference type="SMART" id="SM00448">
    <property type="entry name" value="REC"/>
    <property type="match status" value="1"/>
</dbReference>
<dbReference type="SUPFAM" id="SSF52172">
    <property type="entry name" value="CheY-like"/>
    <property type="match status" value="1"/>
</dbReference>
<dbReference type="SUPFAM" id="SSF46689">
    <property type="entry name" value="Homeodomain-like"/>
    <property type="match status" value="1"/>
</dbReference>
<dbReference type="SUPFAM" id="SSF52540">
    <property type="entry name" value="P-loop containing nucleoside triphosphate hydrolases"/>
    <property type="match status" value="1"/>
</dbReference>
<dbReference type="PROSITE" id="PS50110">
    <property type="entry name" value="RESPONSE_REGULATORY"/>
    <property type="match status" value="1"/>
</dbReference>
<dbReference type="PROSITE" id="PS00675">
    <property type="entry name" value="SIGMA54_INTERACT_1"/>
    <property type="match status" value="1"/>
</dbReference>
<dbReference type="PROSITE" id="PS00676">
    <property type="entry name" value="SIGMA54_INTERACT_2"/>
    <property type="match status" value="1"/>
</dbReference>
<dbReference type="PROSITE" id="PS00688">
    <property type="entry name" value="SIGMA54_INTERACT_3"/>
    <property type="match status" value="1"/>
</dbReference>
<dbReference type="PROSITE" id="PS50045">
    <property type="entry name" value="SIGMA54_INTERACT_4"/>
    <property type="match status" value="1"/>
</dbReference>
<protein>
    <recommendedName>
        <fullName>C4-dicarboxylate transport transcriptional regulatory protein DctD</fullName>
    </recommendedName>
</protein>
<reference key="1">
    <citation type="journal article" date="1990" name="Mol. Plant Microbe Interact.">
        <title>Analysis of the C4-dicarboxylate transport genes of Rhizobium meliloti: nucleotide sequence and deduced products of dctA, dctB, and dctD.</title>
        <authorList>
            <person name="Watson R.J."/>
        </authorList>
    </citation>
    <scope>NUCLEOTIDE SEQUENCE [GENOMIC DNA]</scope>
    <source>
        <strain>JJ1c10</strain>
    </source>
</reference>
<reference key="2">
    <citation type="journal article" date="1989" name="J. Bacteriol.">
        <title>Conservation between coding and regulatory elements of Rhizobium meliloti and Rhizobium leguminosarum dct genes.</title>
        <authorList>
            <person name="Jiang J."/>
            <person name="Gu B."/>
            <person name="Albright L.M."/>
            <person name="Nixon B.T."/>
        </authorList>
    </citation>
    <scope>NUCLEOTIDE SEQUENCE [GENOMIC DNA]</scope>
    <source>
        <strain>1021</strain>
    </source>
</reference>
<reference key="3">
    <citation type="journal article" date="2001" name="Proc. Natl. Acad. Sci. U.S.A.">
        <title>The complete sequence of the 1,683-kb pSymB megaplasmid from the N2-fixing endosymbiont Sinorhizobium meliloti.</title>
        <authorList>
            <person name="Finan T.M."/>
            <person name="Weidner S."/>
            <person name="Wong K."/>
            <person name="Buhrmester J."/>
            <person name="Chain P."/>
            <person name="Vorhoelter F.J."/>
            <person name="Hernandez-Lucas I."/>
            <person name="Becker A."/>
            <person name="Cowie A."/>
            <person name="Gouzy J."/>
            <person name="Golding B."/>
            <person name="Puehler A."/>
        </authorList>
    </citation>
    <scope>NUCLEOTIDE SEQUENCE [LARGE SCALE GENOMIC DNA]</scope>
    <source>
        <strain>1021</strain>
    </source>
</reference>
<reference key="4">
    <citation type="journal article" date="2001" name="Science">
        <title>The composite genome of the legume symbiont Sinorhizobium meliloti.</title>
        <authorList>
            <person name="Galibert F."/>
            <person name="Finan T.M."/>
            <person name="Long S.R."/>
            <person name="Puehler A."/>
            <person name="Abola P."/>
            <person name="Ampe F."/>
            <person name="Barloy-Hubler F."/>
            <person name="Barnett M.J."/>
            <person name="Becker A."/>
            <person name="Boistard P."/>
            <person name="Bothe G."/>
            <person name="Boutry M."/>
            <person name="Bowser L."/>
            <person name="Buhrmester J."/>
            <person name="Cadieu E."/>
            <person name="Capela D."/>
            <person name="Chain P."/>
            <person name="Cowie A."/>
            <person name="Davis R.W."/>
            <person name="Dreano S."/>
            <person name="Federspiel N.A."/>
            <person name="Fisher R.F."/>
            <person name="Gloux S."/>
            <person name="Godrie T."/>
            <person name="Goffeau A."/>
            <person name="Golding B."/>
            <person name="Gouzy J."/>
            <person name="Gurjal M."/>
            <person name="Hernandez-Lucas I."/>
            <person name="Hong A."/>
            <person name="Huizar L."/>
            <person name="Hyman R.W."/>
            <person name="Jones T."/>
            <person name="Kahn D."/>
            <person name="Kahn M.L."/>
            <person name="Kalman S."/>
            <person name="Keating D.H."/>
            <person name="Kiss E."/>
            <person name="Komp C."/>
            <person name="Lelaure V."/>
            <person name="Masuy D."/>
            <person name="Palm C."/>
            <person name="Peck M.C."/>
            <person name="Pohl T.M."/>
            <person name="Portetelle D."/>
            <person name="Purnelle B."/>
            <person name="Ramsperger U."/>
            <person name="Surzycki R."/>
            <person name="Thebault P."/>
            <person name="Vandenbol M."/>
            <person name="Vorhoelter F.J."/>
            <person name="Weidner S."/>
            <person name="Wells D.H."/>
            <person name="Wong K."/>
            <person name="Yeh K.-C."/>
            <person name="Batut J."/>
        </authorList>
    </citation>
    <scope>NUCLEOTIDE SEQUENCE [LARGE SCALE GENOMIC DNA]</scope>
    <source>
        <strain>1021</strain>
    </source>
</reference>
<reference key="5">
    <citation type="journal article" date="1995" name="FEMS Microbiol. Lett.">
        <title>Signal transduction in the Rhizobium meliloti dicarboxylic acid transport system.</title>
        <authorList>
            <person name="Giblin L."/>
            <person name="Boesten B."/>
            <person name="Turk S."/>
            <person name="Hooykaas P."/>
            <person name="O'Gara F."/>
        </authorList>
    </citation>
    <scope>PHOSPHORYLATION</scope>
</reference>
<keyword id="KW-0002">3D-structure</keyword>
<keyword id="KW-0010">Activator</keyword>
<keyword id="KW-0067">ATP-binding</keyword>
<keyword id="KW-0963">Cytoplasm</keyword>
<keyword id="KW-0238">DNA-binding</keyword>
<keyword id="KW-0547">Nucleotide-binding</keyword>
<keyword id="KW-0597">Phosphoprotein</keyword>
<keyword id="KW-0614">Plasmid</keyword>
<keyword id="KW-1185">Reference proteome</keyword>
<keyword id="KW-0804">Transcription</keyword>
<keyword id="KW-0805">Transcription regulation</keyword>
<keyword id="KW-0902">Two-component regulatory system</keyword>
<name>DCTD_RHIME</name>
<evidence type="ECO:0000255" key="1"/>
<evidence type="ECO:0000255" key="2">
    <source>
        <dbReference type="PROSITE-ProRule" id="PRU00169"/>
    </source>
</evidence>
<evidence type="ECO:0000255" key="3">
    <source>
        <dbReference type="PROSITE-ProRule" id="PRU00193"/>
    </source>
</evidence>
<evidence type="ECO:0000269" key="4">
    <source>
    </source>
</evidence>
<evidence type="ECO:0000305" key="5"/>
<evidence type="ECO:0007829" key="6">
    <source>
        <dbReference type="PDB" id="1QKK"/>
    </source>
</evidence>
<comment type="function">
    <text>Member of the two-component regulatory system DctB/DctD involved in the transport of C4-dicarboxylates. When activated by DctB acts in conjunction with sigma-54 to activate the transcription of dctA.</text>
</comment>
<comment type="subcellular location">
    <subcellularLocation>
        <location evidence="5">Cytoplasm</location>
    </subcellularLocation>
</comment>
<comment type="PTM">
    <text evidence="4">Phosphorylated by DctB.</text>
</comment>
<comment type="sequence caution" evidence="5">
    <conflict type="erroneous initiation">
        <sequence resource="EMBL-CDS" id="AAA63514"/>
    </conflict>
</comment>
<gene>
    <name type="primary">dctD</name>
    <name type="ordered locus">RB1525</name>
    <name type="ORF">SMb20613</name>
</gene>